<feature type="chain" id="PRO_0000275576" description="NAD(P)H-quinone oxidoreductase subunit 1, chloroplastic">
    <location>
        <begin position="1"/>
        <end position="376"/>
    </location>
</feature>
<feature type="transmembrane region" description="Helical" evidence="1">
    <location>
        <begin position="27"/>
        <end position="47"/>
    </location>
</feature>
<feature type="transmembrane region" description="Helical" evidence="1">
    <location>
        <begin position="65"/>
        <end position="85"/>
    </location>
</feature>
<feature type="transmembrane region" description="Helical" evidence="1">
    <location>
        <begin position="97"/>
        <end position="117"/>
    </location>
</feature>
<feature type="transmembrane region" description="Helical" evidence="1">
    <location>
        <begin position="130"/>
        <end position="150"/>
    </location>
</feature>
<feature type="transmembrane region" description="Helical" evidence="1">
    <location>
        <begin position="166"/>
        <end position="186"/>
    </location>
</feature>
<feature type="transmembrane region" description="Helical" evidence="1">
    <location>
        <begin position="251"/>
        <end position="271"/>
    </location>
</feature>
<feature type="transmembrane region" description="Helical" evidence="1">
    <location>
        <begin position="272"/>
        <end position="292"/>
    </location>
</feature>
<feature type="transmembrane region" description="Helical" evidence="1">
    <location>
        <begin position="310"/>
        <end position="330"/>
    </location>
</feature>
<feature type="transmembrane region" description="Helical" evidence="1">
    <location>
        <begin position="353"/>
        <end position="373"/>
    </location>
</feature>
<geneLocation type="chloroplast"/>
<accession>Q1ACE4</accession>
<gene>
    <name evidence="1" type="primary">ndhA</name>
</gene>
<dbReference type="EC" id="7.1.1.-" evidence="1"/>
<dbReference type="EMBL" id="DQ229107">
    <property type="protein sequence ID" value="ABA61915.1"/>
    <property type="status" value="ALT_INIT"/>
    <property type="molecule type" value="Genomic_DNA"/>
</dbReference>
<dbReference type="RefSeq" id="YP_635803.1">
    <property type="nucleotide sequence ID" value="NC_008097.1"/>
</dbReference>
<dbReference type="SMR" id="Q1ACE4"/>
<dbReference type="GeneID" id="4100285"/>
<dbReference type="GO" id="GO:0009535">
    <property type="term" value="C:chloroplast thylakoid membrane"/>
    <property type="evidence" value="ECO:0007669"/>
    <property type="project" value="UniProtKB-SubCell"/>
</dbReference>
<dbReference type="GO" id="GO:0003954">
    <property type="term" value="F:NADH dehydrogenase activity"/>
    <property type="evidence" value="ECO:0007669"/>
    <property type="project" value="TreeGrafter"/>
</dbReference>
<dbReference type="GO" id="GO:0016655">
    <property type="term" value="F:oxidoreductase activity, acting on NAD(P)H, quinone or similar compound as acceptor"/>
    <property type="evidence" value="ECO:0007669"/>
    <property type="project" value="UniProtKB-UniRule"/>
</dbReference>
<dbReference type="GO" id="GO:0048038">
    <property type="term" value="F:quinone binding"/>
    <property type="evidence" value="ECO:0007669"/>
    <property type="project" value="UniProtKB-KW"/>
</dbReference>
<dbReference type="GO" id="GO:0009060">
    <property type="term" value="P:aerobic respiration"/>
    <property type="evidence" value="ECO:0007669"/>
    <property type="project" value="TreeGrafter"/>
</dbReference>
<dbReference type="GO" id="GO:0019684">
    <property type="term" value="P:photosynthesis, light reaction"/>
    <property type="evidence" value="ECO:0007669"/>
    <property type="project" value="UniProtKB-UniRule"/>
</dbReference>
<dbReference type="HAMAP" id="MF_01350">
    <property type="entry name" value="NDH1_NuoH"/>
    <property type="match status" value="1"/>
</dbReference>
<dbReference type="InterPro" id="IPR001694">
    <property type="entry name" value="NADH_UbQ_OxRdtase_su1/FPO"/>
</dbReference>
<dbReference type="InterPro" id="IPR018086">
    <property type="entry name" value="NADH_UbQ_OxRdtase_su1_CS"/>
</dbReference>
<dbReference type="NCBIfam" id="NF004741">
    <property type="entry name" value="PRK06076.1-2"/>
    <property type="match status" value="1"/>
</dbReference>
<dbReference type="NCBIfam" id="NF004744">
    <property type="entry name" value="PRK06076.1-5"/>
    <property type="match status" value="1"/>
</dbReference>
<dbReference type="PANTHER" id="PTHR11432">
    <property type="entry name" value="NADH DEHYDROGENASE SUBUNIT 1"/>
    <property type="match status" value="1"/>
</dbReference>
<dbReference type="PANTHER" id="PTHR11432:SF3">
    <property type="entry name" value="NADH-UBIQUINONE OXIDOREDUCTASE CHAIN 1"/>
    <property type="match status" value="1"/>
</dbReference>
<dbReference type="Pfam" id="PF00146">
    <property type="entry name" value="NADHdh"/>
    <property type="match status" value="1"/>
</dbReference>
<dbReference type="PROSITE" id="PS00667">
    <property type="entry name" value="COMPLEX1_ND1_1"/>
    <property type="match status" value="1"/>
</dbReference>
<dbReference type="PROSITE" id="PS00668">
    <property type="entry name" value="COMPLEX1_ND1_2"/>
    <property type="match status" value="1"/>
</dbReference>
<keyword id="KW-0150">Chloroplast</keyword>
<keyword id="KW-0472">Membrane</keyword>
<keyword id="KW-0520">NAD</keyword>
<keyword id="KW-0521">NADP</keyword>
<keyword id="KW-0934">Plastid</keyword>
<keyword id="KW-0618">Plastoquinone</keyword>
<keyword id="KW-0874">Quinone</keyword>
<keyword id="KW-0793">Thylakoid</keyword>
<keyword id="KW-1278">Translocase</keyword>
<keyword id="KW-0812">Transmembrane</keyword>
<keyword id="KW-1133">Transmembrane helix</keyword>
<name>NU1C_CHAVU</name>
<comment type="function">
    <text evidence="1">NDH shuttles electrons from NAD(P)H:plastoquinone, via FMN and iron-sulfur (Fe-S) centers, to quinones in the photosynthetic chain and possibly in a chloroplast respiratory chain. The immediate electron acceptor for the enzyme in this species is believed to be plastoquinone. Couples the redox reaction to proton translocation, and thus conserves the redox energy in a proton gradient.</text>
</comment>
<comment type="catalytic activity">
    <reaction evidence="1">
        <text>a plastoquinone + NADH + (n+1) H(+)(in) = a plastoquinol + NAD(+) + n H(+)(out)</text>
        <dbReference type="Rhea" id="RHEA:42608"/>
        <dbReference type="Rhea" id="RHEA-COMP:9561"/>
        <dbReference type="Rhea" id="RHEA-COMP:9562"/>
        <dbReference type="ChEBI" id="CHEBI:15378"/>
        <dbReference type="ChEBI" id="CHEBI:17757"/>
        <dbReference type="ChEBI" id="CHEBI:57540"/>
        <dbReference type="ChEBI" id="CHEBI:57945"/>
        <dbReference type="ChEBI" id="CHEBI:62192"/>
    </reaction>
</comment>
<comment type="catalytic activity">
    <reaction evidence="1">
        <text>a plastoquinone + NADPH + (n+1) H(+)(in) = a plastoquinol + NADP(+) + n H(+)(out)</text>
        <dbReference type="Rhea" id="RHEA:42612"/>
        <dbReference type="Rhea" id="RHEA-COMP:9561"/>
        <dbReference type="Rhea" id="RHEA-COMP:9562"/>
        <dbReference type="ChEBI" id="CHEBI:15378"/>
        <dbReference type="ChEBI" id="CHEBI:17757"/>
        <dbReference type="ChEBI" id="CHEBI:57783"/>
        <dbReference type="ChEBI" id="CHEBI:58349"/>
        <dbReference type="ChEBI" id="CHEBI:62192"/>
    </reaction>
</comment>
<comment type="subunit">
    <text evidence="1">NDH is composed of at least 16 different subunits, 5 of which are encoded in the nucleus.</text>
</comment>
<comment type="subcellular location">
    <subcellularLocation>
        <location evidence="1">Plastid</location>
        <location evidence="1">Chloroplast thylakoid membrane</location>
        <topology evidence="1">Multi-pass membrane protein</topology>
    </subcellularLocation>
</comment>
<comment type="similarity">
    <text evidence="1">Belongs to the complex I subunit 1 family.</text>
</comment>
<comment type="sequence caution" evidence="2">
    <conflict type="erroneous initiation">
        <sequence resource="EMBL-CDS" id="ABA61915"/>
    </conflict>
</comment>
<evidence type="ECO:0000255" key="1">
    <source>
        <dbReference type="HAMAP-Rule" id="MF_01350"/>
    </source>
</evidence>
<evidence type="ECO:0000305" key="2"/>
<sequence>MSSLVRLKFNAIKLVIDFGISENIAYLISIFLPIVLLLVISVLGVLVTVWLERKISAAVQQRIGPEYAGSLGIMQAIVDGVKLLIKEDIIPAQGDRWLFSIGPVLVVTPVILSYLVVPFGKNIILSDIRLGIFFWIVISSITPLGLLIAGYASNNKYSLLGGLRAAAQSISYEIPLTLCVLSISLLSNTLSTSDIVEQQCKYGILSWNIWRQPVGFITFFIASLAECERLPFDLPEAEEELVAGYQTEYSGIKFGIFYVASYLNLLVSSLFAVVLYLGGWNFPIPTTLIFFISMYKVSLPLDSSNLLLELIIPIIHISITLAKTYLFIFFAILARWTLPRIRIDQLLDLGWKFLLPMAVGNLLLTASFQLTLFEFS</sequence>
<organism>
    <name type="scientific">Chara vulgaris</name>
    <name type="common">Common stonewort</name>
    <dbReference type="NCBI Taxonomy" id="55564"/>
    <lineage>
        <taxon>Eukaryota</taxon>
        <taxon>Viridiplantae</taxon>
        <taxon>Streptophyta</taxon>
        <taxon>Charophyceae</taxon>
        <taxon>Charales</taxon>
        <taxon>Characeae</taxon>
        <taxon>Chara</taxon>
    </lineage>
</organism>
<proteinExistence type="inferred from homology"/>
<protein>
    <recommendedName>
        <fullName evidence="1">NAD(P)H-quinone oxidoreductase subunit 1, chloroplastic</fullName>
        <ecNumber evidence="1">7.1.1.-</ecNumber>
    </recommendedName>
    <alternativeName>
        <fullName evidence="1">NAD(P)H dehydrogenase subunit 1</fullName>
        <shortName evidence="1">NDH subunit 1</shortName>
    </alternativeName>
    <alternativeName>
        <fullName evidence="1">NADH-plastoquinone oxidoreductase subunit 1</fullName>
    </alternativeName>
</protein>
<reference key="1">
    <citation type="journal article" date="2006" name="Mol. Biol. Evol.">
        <title>The chloroplast genome sequence of Chara vulgaris sheds new light into the closest green algal relatives of land plants.</title>
        <authorList>
            <person name="Turmel M."/>
            <person name="Otis C."/>
            <person name="Lemieux C."/>
        </authorList>
    </citation>
    <scope>NUCLEOTIDE SEQUENCE [LARGE SCALE GENOMIC DNA]</scope>
</reference>